<comment type="similarity">
    <text evidence="1">Belongs to the SfsA family.</text>
</comment>
<keyword id="KW-1185">Reference proteome</keyword>
<reference key="1">
    <citation type="submission" date="2005-10" db="EMBL/GenBank/DDBJ databases">
        <title>Complete sequence of Pelobacter carbinolicus DSM 2380.</title>
        <authorList>
            <person name="Copeland A."/>
            <person name="Lucas S."/>
            <person name="Lapidus A."/>
            <person name="Barry K."/>
            <person name="Detter J.C."/>
            <person name="Glavina T."/>
            <person name="Hammon N."/>
            <person name="Israni S."/>
            <person name="Pitluck S."/>
            <person name="Chertkov O."/>
            <person name="Schmutz J."/>
            <person name="Larimer F."/>
            <person name="Land M."/>
            <person name="Kyrpides N."/>
            <person name="Ivanova N."/>
            <person name="Richardson P."/>
        </authorList>
    </citation>
    <scope>NUCLEOTIDE SEQUENCE [LARGE SCALE GENOMIC DNA]</scope>
    <source>
        <strain>DSM 2380 / NBRC 103641 / GraBd1</strain>
    </source>
</reference>
<evidence type="ECO:0000255" key="1">
    <source>
        <dbReference type="HAMAP-Rule" id="MF_00095"/>
    </source>
</evidence>
<accession>Q3A286</accession>
<sequence>MKLPAPLIEGRLVRRYKRFLADVELADGSLVTAHTPNTGSMLQCAVPGHRVLISRSDNPKRKLAYTLELIEVAGFWVDTHTHRTNRVAEEALRGGAVLEFTGWQVTPEHTYGDSRIDFLLQQNDRQALVEVKNVTLLCDGQCACFPDAVTTRGQKHLRTLMDARRAGMRAAILFVVQRGEATAFRPADTIDPEYGRLLRQAVSEGVEALAYRTRISPTQTFIDRRLPVWLD</sequence>
<protein>
    <recommendedName>
        <fullName evidence="1">Sugar fermentation stimulation protein homolog</fullName>
    </recommendedName>
</protein>
<organism>
    <name type="scientific">Syntrophotalea carbinolica (strain DSM 2380 / NBRC 103641 / GraBd1)</name>
    <name type="common">Pelobacter carbinolicus</name>
    <dbReference type="NCBI Taxonomy" id="338963"/>
    <lineage>
        <taxon>Bacteria</taxon>
        <taxon>Pseudomonadati</taxon>
        <taxon>Thermodesulfobacteriota</taxon>
        <taxon>Desulfuromonadia</taxon>
        <taxon>Desulfuromonadales</taxon>
        <taxon>Syntrophotaleaceae</taxon>
        <taxon>Syntrophotalea</taxon>
    </lineage>
</organism>
<name>SFSA_SYNC1</name>
<gene>
    <name evidence="1" type="primary">sfsA</name>
    <name type="ordered locus">Pcar_2282</name>
</gene>
<proteinExistence type="inferred from homology"/>
<dbReference type="EMBL" id="CP000142">
    <property type="protein sequence ID" value="ABA89521.1"/>
    <property type="molecule type" value="Genomic_DNA"/>
</dbReference>
<dbReference type="RefSeq" id="WP_011342039.1">
    <property type="nucleotide sequence ID" value="NC_007498.2"/>
</dbReference>
<dbReference type="SMR" id="Q3A286"/>
<dbReference type="STRING" id="338963.Pcar_2282"/>
<dbReference type="KEGG" id="pca:Pcar_2282"/>
<dbReference type="eggNOG" id="COG1489">
    <property type="taxonomic scope" value="Bacteria"/>
</dbReference>
<dbReference type="HOGENOM" id="CLU_052299_2_0_7"/>
<dbReference type="OrthoDB" id="9802365at2"/>
<dbReference type="Proteomes" id="UP000002534">
    <property type="component" value="Chromosome"/>
</dbReference>
<dbReference type="GO" id="GO:0003677">
    <property type="term" value="F:DNA binding"/>
    <property type="evidence" value="ECO:0007669"/>
    <property type="project" value="InterPro"/>
</dbReference>
<dbReference type="CDD" id="cd22359">
    <property type="entry name" value="SfsA-like_bacterial"/>
    <property type="match status" value="1"/>
</dbReference>
<dbReference type="Gene3D" id="2.40.50.580">
    <property type="match status" value="1"/>
</dbReference>
<dbReference type="Gene3D" id="3.40.1350.60">
    <property type="match status" value="1"/>
</dbReference>
<dbReference type="HAMAP" id="MF_00095">
    <property type="entry name" value="SfsA"/>
    <property type="match status" value="1"/>
</dbReference>
<dbReference type="InterPro" id="IPR005224">
    <property type="entry name" value="SfsA"/>
</dbReference>
<dbReference type="InterPro" id="IPR040452">
    <property type="entry name" value="SfsA_C"/>
</dbReference>
<dbReference type="InterPro" id="IPR041465">
    <property type="entry name" value="SfsA_N"/>
</dbReference>
<dbReference type="NCBIfam" id="TIGR00230">
    <property type="entry name" value="sfsA"/>
    <property type="match status" value="1"/>
</dbReference>
<dbReference type="PANTHER" id="PTHR30545">
    <property type="entry name" value="SUGAR FERMENTATION STIMULATION PROTEIN A"/>
    <property type="match status" value="1"/>
</dbReference>
<dbReference type="PANTHER" id="PTHR30545:SF2">
    <property type="entry name" value="SUGAR FERMENTATION STIMULATION PROTEIN A"/>
    <property type="match status" value="1"/>
</dbReference>
<dbReference type="Pfam" id="PF03749">
    <property type="entry name" value="SfsA"/>
    <property type="match status" value="1"/>
</dbReference>
<dbReference type="Pfam" id="PF17746">
    <property type="entry name" value="SfsA_N"/>
    <property type="match status" value="1"/>
</dbReference>
<feature type="chain" id="PRO_1000008000" description="Sugar fermentation stimulation protein homolog">
    <location>
        <begin position="1"/>
        <end position="231"/>
    </location>
</feature>